<evidence type="ECO:0000250" key="1"/>
<evidence type="ECO:0000250" key="2">
    <source>
        <dbReference type="UniProtKB" id="Q03431"/>
    </source>
</evidence>
<evidence type="ECO:0000255" key="3"/>
<evidence type="ECO:0000256" key="4">
    <source>
        <dbReference type="SAM" id="MobiDB-lite"/>
    </source>
</evidence>
<evidence type="ECO:0000305" key="5"/>
<dbReference type="EMBL" id="BC116022">
    <property type="protein sequence ID" value="AAI16023.1"/>
    <property type="molecule type" value="mRNA"/>
</dbReference>
<dbReference type="RefSeq" id="NP_001068800.1">
    <property type="nucleotide sequence ID" value="NM_001075332.1"/>
</dbReference>
<dbReference type="SMR" id="Q1LZF7"/>
<dbReference type="FunCoup" id="Q1LZF7">
    <property type="interactions" value="99"/>
</dbReference>
<dbReference type="STRING" id="9913.ENSBTAP00000073806"/>
<dbReference type="GlyCosmos" id="Q1LZF7">
    <property type="glycosylation" value="4 sites, No reported glycans"/>
</dbReference>
<dbReference type="GlyGen" id="Q1LZF7">
    <property type="glycosylation" value="4 sites"/>
</dbReference>
<dbReference type="PaxDb" id="9913-ENSBTAP00000022555"/>
<dbReference type="GeneID" id="507783"/>
<dbReference type="KEGG" id="bta:507783"/>
<dbReference type="CTD" id="5745"/>
<dbReference type="eggNOG" id="KOG4564">
    <property type="taxonomic scope" value="Eukaryota"/>
</dbReference>
<dbReference type="InParanoid" id="Q1LZF7"/>
<dbReference type="OrthoDB" id="6160250at2759"/>
<dbReference type="Proteomes" id="UP000009136">
    <property type="component" value="Unplaced"/>
</dbReference>
<dbReference type="GO" id="GO:0005886">
    <property type="term" value="C:plasma membrane"/>
    <property type="evidence" value="ECO:0000250"/>
    <property type="project" value="UniProtKB"/>
</dbReference>
<dbReference type="GO" id="GO:0008528">
    <property type="term" value="F:G protein-coupled peptide receptor activity"/>
    <property type="evidence" value="ECO:0000318"/>
    <property type="project" value="GO_Central"/>
</dbReference>
<dbReference type="GO" id="GO:0004991">
    <property type="term" value="F:parathyroid hormone receptor activity"/>
    <property type="evidence" value="ECO:0000250"/>
    <property type="project" value="UniProtKB"/>
</dbReference>
<dbReference type="GO" id="GO:0017046">
    <property type="term" value="F:peptide hormone binding"/>
    <property type="evidence" value="ECO:0000250"/>
    <property type="project" value="UniProtKB"/>
</dbReference>
<dbReference type="GO" id="GO:0042803">
    <property type="term" value="F:protein homodimerization activity"/>
    <property type="evidence" value="ECO:0000250"/>
    <property type="project" value="UniProtKB"/>
</dbReference>
<dbReference type="GO" id="GO:0007189">
    <property type="term" value="P:adenylate cyclase-activating G protein-coupled receptor signaling pathway"/>
    <property type="evidence" value="ECO:0000250"/>
    <property type="project" value="UniProtKB"/>
</dbReference>
<dbReference type="GO" id="GO:0007188">
    <property type="term" value="P:adenylate cyclase-modulating G protein-coupled receptor signaling pathway"/>
    <property type="evidence" value="ECO:0000250"/>
    <property type="project" value="UniProtKB"/>
</dbReference>
<dbReference type="GO" id="GO:0007166">
    <property type="term" value="P:cell surface receptor signaling pathway"/>
    <property type="evidence" value="ECO:0007669"/>
    <property type="project" value="InterPro"/>
</dbReference>
<dbReference type="GO" id="GO:0006874">
    <property type="term" value="P:intracellular calcium ion homeostasis"/>
    <property type="evidence" value="ECO:0000318"/>
    <property type="project" value="GO_Central"/>
</dbReference>
<dbReference type="CDD" id="cd15984">
    <property type="entry name" value="7tmB1_PTH1R"/>
    <property type="match status" value="1"/>
</dbReference>
<dbReference type="FunFam" id="1.20.1070.10:FF:000070">
    <property type="entry name" value="Parathyroid hormone/parathyroid hormone-related peptide receptor"/>
    <property type="match status" value="1"/>
</dbReference>
<dbReference type="Gene3D" id="4.10.1240.10">
    <property type="entry name" value="GPCR, family 2, extracellular hormone receptor domain"/>
    <property type="match status" value="1"/>
</dbReference>
<dbReference type="Gene3D" id="1.20.1070.10">
    <property type="entry name" value="Rhodopsin 7-helix transmembrane proteins"/>
    <property type="match status" value="1"/>
</dbReference>
<dbReference type="InterPro" id="IPR050332">
    <property type="entry name" value="GPCR_2"/>
</dbReference>
<dbReference type="InterPro" id="IPR017981">
    <property type="entry name" value="GPCR_2-like_7TM"/>
</dbReference>
<dbReference type="InterPro" id="IPR036445">
    <property type="entry name" value="GPCR_2_extracell_dom_sf"/>
</dbReference>
<dbReference type="InterPro" id="IPR001879">
    <property type="entry name" value="GPCR_2_extracellular_dom"/>
</dbReference>
<dbReference type="InterPro" id="IPR002170">
    <property type="entry name" value="GPCR_2_parathyroid_rcpt"/>
</dbReference>
<dbReference type="InterPro" id="IPR000832">
    <property type="entry name" value="GPCR_2_secretin-like"/>
</dbReference>
<dbReference type="InterPro" id="IPR017983">
    <property type="entry name" value="GPCR_2_secretin-like_CS"/>
</dbReference>
<dbReference type="PANTHER" id="PTHR45620:SF27">
    <property type="entry name" value="PARATHYROID HORMONE_PARATHYROID HORMONE-RELATED PEPTIDE RECEPTOR"/>
    <property type="match status" value="1"/>
</dbReference>
<dbReference type="PANTHER" id="PTHR45620">
    <property type="entry name" value="PDF RECEPTOR-LIKE PROTEIN-RELATED"/>
    <property type="match status" value="1"/>
</dbReference>
<dbReference type="Pfam" id="PF00002">
    <property type="entry name" value="7tm_2"/>
    <property type="match status" value="1"/>
</dbReference>
<dbReference type="Pfam" id="PF02793">
    <property type="entry name" value="HRM"/>
    <property type="match status" value="1"/>
</dbReference>
<dbReference type="PRINTS" id="PR00249">
    <property type="entry name" value="GPCRSECRETIN"/>
</dbReference>
<dbReference type="PRINTS" id="PR00393">
    <property type="entry name" value="PTRHORMONER"/>
</dbReference>
<dbReference type="SMART" id="SM00008">
    <property type="entry name" value="HormR"/>
    <property type="match status" value="1"/>
</dbReference>
<dbReference type="SUPFAM" id="SSF81321">
    <property type="entry name" value="Family A G protein-coupled receptor-like"/>
    <property type="match status" value="1"/>
</dbReference>
<dbReference type="SUPFAM" id="SSF111418">
    <property type="entry name" value="Hormone receptor domain"/>
    <property type="match status" value="1"/>
</dbReference>
<dbReference type="PROSITE" id="PS00649">
    <property type="entry name" value="G_PROTEIN_RECEP_F2_1"/>
    <property type="match status" value="1"/>
</dbReference>
<dbReference type="PROSITE" id="PS00650">
    <property type="entry name" value="G_PROTEIN_RECEP_F2_2"/>
    <property type="match status" value="1"/>
</dbReference>
<dbReference type="PROSITE" id="PS50227">
    <property type="entry name" value="G_PROTEIN_RECEP_F2_3"/>
    <property type="match status" value="1"/>
</dbReference>
<dbReference type="PROSITE" id="PS50261">
    <property type="entry name" value="G_PROTEIN_RECEP_F2_4"/>
    <property type="match status" value="1"/>
</dbReference>
<name>PTH1R_BOVIN</name>
<proteinExistence type="evidence at transcript level"/>
<gene>
    <name type="primary">PTH1R</name>
    <name type="synonym">PTHR1</name>
</gene>
<reference key="1">
    <citation type="submission" date="2006-05" db="EMBL/GenBank/DDBJ databases">
        <authorList>
            <consortium name="NIH - Mammalian Gene Collection (MGC) project"/>
        </authorList>
    </citation>
    <scope>NUCLEOTIDE SEQUENCE [LARGE SCALE MRNA]</scope>
    <source>
        <strain>Hereford</strain>
        <tissue>Ascending colon</tissue>
    </source>
</reference>
<keyword id="KW-1003">Cell membrane</keyword>
<keyword id="KW-1015">Disulfide bond</keyword>
<keyword id="KW-0297">G-protein coupled receptor</keyword>
<keyword id="KW-0325">Glycoprotein</keyword>
<keyword id="KW-0472">Membrane</keyword>
<keyword id="KW-0597">Phosphoprotein</keyword>
<keyword id="KW-0675">Receptor</keyword>
<keyword id="KW-1185">Reference proteome</keyword>
<keyword id="KW-0732">Signal</keyword>
<keyword id="KW-0807">Transducer</keyword>
<keyword id="KW-0812">Transmembrane</keyword>
<keyword id="KW-1133">Transmembrane helix</keyword>
<feature type="signal peptide" evidence="3">
    <location>
        <begin position="1"/>
        <end position="28"/>
    </location>
</feature>
<feature type="chain" id="PRO_0000250990" description="Parathyroid hormone/parathyroid hormone-related peptide receptor">
    <location>
        <begin position="29"/>
        <end position="589"/>
    </location>
</feature>
<feature type="topological domain" description="Extracellular" evidence="3">
    <location>
        <begin position="29"/>
        <end position="188"/>
    </location>
</feature>
<feature type="transmembrane region" description="Helical; Name=1" evidence="3">
    <location>
        <begin position="189"/>
        <end position="209"/>
    </location>
</feature>
<feature type="topological domain" description="Cytoplasmic" evidence="3">
    <location>
        <begin position="210"/>
        <end position="223"/>
    </location>
</feature>
<feature type="transmembrane region" description="Helical; Name=2" evidence="3">
    <location>
        <begin position="224"/>
        <end position="244"/>
    </location>
</feature>
<feature type="topological domain" description="Extracellular" evidence="3">
    <location>
        <begin position="245"/>
        <end position="294"/>
    </location>
</feature>
<feature type="transmembrane region" description="Helical; Name=3" evidence="3">
    <location>
        <begin position="295"/>
        <end position="315"/>
    </location>
</feature>
<feature type="topological domain" description="Cytoplasmic" evidence="3">
    <location>
        <begin position="316"/>
        <end position="318"/>
    </location>
</feature>
<feature type="transmembrane region" description="Helical; Name=4" evidence="3">
    <location>
        <begin position="319"/>
        <end position="339"/>
    </location>
</feature>
<feature type="topological domain" description="Extracellular" evidence="3">
    <location>
        <begin position="340"/>
        <end position="360"/>
    </location>
</feature>
<feature type="transmembrane region" description="Helical; Name=5" evidence="3">
    <location>
        <begin position="361"/>
        <end position="381"/>
    </location>
</feature>
<feature type="topological domain" description="Cytoplasmic" evidence="3">
    <location>
        <begin position="382"/>
        <end position="404"/>
    </location>
</feature>
<feature type="transmembrane region" description="Helical; Name=6" evidence="3">
    <location>
        <begin position="405"/>
        <end position="425"/>
    </location>
</feature>
<feature type="topological domain" description="Extracellular" evidence="3">
    <location>
        <begin position="426"/>
        <end position="439"/>
    </location>
</feature>
<feature type="transmembrane region" description="Helical; Name=7" evidence="3">
    <location>
        <begin position="440"/>
        <end position="460"/>
    </location>
</feature>
<feature type="topological domain" description="Cytoplasmic" evidence="3">
    <location>
        <begin position="461"/>
        <end position="589"/>
    </location>
</feature>
<feature type="region of interest" description="Disordered" evidence="4">
    <location>
        <begin position="64"/>
        <end position="105"/>
    </location>
</feature>
<feature type="region of interest" description="Disordered" evidence="4">
    <location>
        <begin position="524"/>
        <end position="549"/>
    </location>
</feature>
<feature type="short sequence motif" description="Important for interaction with G proteins" evidence="1">
    <location>
        <begin position="473"/>
        <end position="476"/>
    </location>
</feature>
<feature type="compositionally biased region" description="Basic and acidic residues" evidence="4">
    <location>
        <begin position="81"/>
        <end position="90"/>
    </location>
</feature>
<feature type="modified residue" description="Phosphothreonine" evidence="2">
    <location>
        <position position="547"/>
    </location>
</feature>
<feature type="glycosylation site" description="N-linked (GlcNAc...) asparagine" evidence="3">
    <location>
        <position position="151"/>
    </location>
</feature>
<feature type="glycosylation site" description="N-linked (GlcNAc...) asparagine" evidence="3">
    <location>
        <position position="161"/>
    </location>
</feature>
<feature type="glycosylation site" description="N-linked (GlcNAc...) asparagine" evidence="3">
    <location>
        <position position="166"/>
    </location>
</feature>
<feature type="glycosylation site" description="N-linked (GlcNAc...) asparagine" evidence="3">
    <location>
        <position position="176"/>
    </location>
</feature>
<feature type="disulfide bond" evidence="2">
    <location>
        <begin position="48"/>
        <end position="117"/>
    </location>
</feature>
<feature type="disulfide bond" evidence="2">
    <location>
        <begin position="108"/>
        <end position="148"/>
    </location>
</feature>
<feature type="disulfide bond" evidence="2">
    <location>
        <begin position="131"/>
        <end position="170"/>
    </location>
</feature>
<accession>Q1LZF7</accession>
<protein>
    <recommendedName>
        <fullName>Parathyroid hormone/parathyroid hormone-related peptide receptor</fullName>
    </recommendedName>
    <alternativeName>
        <fullName>PTH/PTHrP type I receptor</fullName>
        <shortName>PTH/PTHr receptor</shortName>
    </alternativeName>
    <alternativeName>
        <fullName>Parathyroid hormone 1 receptor</fullName>
        <shortName>PTH1 receptor</shortName>
    </alternativeName>
</protein>
<sequence length="589" mass="65862">MGAARIAPGLALLLCCPVLSSAYALVDADDVMTKEEQIFLLHRAQAQCEKRLKEVLQRPADIMESDKGWASASTSGKPKKEKPSGKLHPESEEDKEVPTGSRPRGRPCLPEWDHILCWPLGAPGEVVAMPCPDYIYDFNHKGHAYRRCDRNGSWELVPGHNRTWANYSECVKFLTNETREREVFDRLGMIYTVGYSVSLASLTVAVLILAYFRRLHCTRNYIHMHLFLSFMLRAVSIFVKDAVLYSGTALDEAERLTEEELRAIAQAPPPPAAAAGYVGCRVAVTFFLYFLATNYYWILVEGLYLHSLIFMAFFSEKKYLWGFTVFGWGLPAIFVAVWVSVRATLANTGCWDLSSGNKKWIIQVPILASIVLNFILFINIVRVLATKLRETNAGRCDTRQQYRKLLKSTLVLMPLFGVHYIVFMATPYTEVSGTLWQVQMHYEMLFNSFQGFFVAIIYCFCNGEVQAEIKKSWSRWTLALDFKRKARSGSSSYSYGPMVSHTSVTNVGPRTGLGLPLSPRLLPAATTNGHPPLPGHTKSGSPALQATPPAVAAPKEDGFLNGSCSGLDEEACAPERPPVLLQEEWETVM</sequence>
<comment type="function">
    <text evidence="2">G-protein-coupled receptor for parathyroid hormone (PTH) and for parathyroid hormone-related peptide (PTHLH). Ligand binding causes a conformation change that triggers signaling via guanine nucleotide-binding proteins (G proteins) and modulates the activity of downstream effectors, such as adenylate cyclase (cAMP). PTH1R is coupled to G(s) G alpha proteins and mediates activation of adenylate cyclase activity. PTHLH dissociates from PTH1R more rapidly than PTH; as consequence, the cAMP response induced by PTHLH decays faster than the response induced by PTH.</text>
</comment>
<comment type="subunit">
    <text evidence="2">Homodimer in the absence of bound ligand. Peptide hormone binding leads to dissociation of the homodimer.</text>
</comment>
<comment type="subcellular location">
    <subcellularLocation>
        <location evidence="2">Cell membrane</location>
        <topology evidence="2">Multi-pass membrane protein</topology>
    </subcellularLocation>
</comment>
<comment type="PTM">
    <text evidence="2">N-glycosylated.</text>
</comment>
<comment type="similarity">
    <text evidence="5">Belongs to the G-protein coupled receptor 2 family.</text>
</comment>
<organism>
    <name type="scientific">Bos taurus</name>
    <name type="common">Bovine</name>
    <dbReference type="NCBI Taxonomy" id="9913"/>
    <lineage>
        <taxon>Eukaryota</taxon>
        <taxon>Metazoa</taxon>
        <taxon>Chordata</taxon>
        <taxon>Craniata</taxon>
        <taxon>Vertebrata</taxon>
        <taxon>Euteleostomi</taxon>
        <taxon>Mammalia</taxon>
        <taxon>Eutheria</taxon>
        <taxon>Laurasiatheria</taxon>
        <taxon>Artiodactyla</taxon>
        <taxon>Ruminantia</taxon>
        <taxon>Pecora</taxon>
        <taxon>Bovidae</taxon>
        <taxon>Bovinae</taxon>
        <taxon>Bos</taxon>
    </lineage>
</organism>